<reference key="1">
    <citation type="journal article" date="2001" name="J. Bacteriol.">
        <title>Peroxisomal catalase in the methylotrophic yeast Candida boidinii: transport efficiency and metabolic significance.</title>
        <authorList>
            <person name="Horiguchi H."/>
            <person name="Yurimoto H."/>
            <person name="Goh T.K."/>
            <person name="Nakagawa T."/>
            <person name="Kato N."/>
            <person name="Sakai Y."/>
        </authorList>
    </citation>
    <scope>NUCLEOTIDE SEQUENCE [GENOMIC DNA]</scope>
    <scope>SUBCELLULAR LOCATION</scope>
    <source>
        <strain>S2</strain>
    </source>
</reference>
<evidence type="ECO:0000250" key="1">
    <source>
        <dbReference type="UniProtKB" id="P04040"/>
    </source>
</evidence>
<evidence type="ECO:0000250" key="2">
    <source>
        <dbReference type="UniProtKB" id="P15202"/>
    </source>
</evidence>
<evidence type="ECO:0000255" key="3">
    <source>
        <dbReference type="PROSITE-ProRule" id="PRU10013"/>
    </source>
</evidence>
<evidence type="ECO:0000269" key="4">
    <source>
    </source>
</evidence>
<evidence type="ECO:0000305" key="5"/>
<name>CATA_CANBO</name>
<gene>
    <name type="primary">CTA1</name>
</gene>
<feature type="chain" id="PRO_0000084919" description="Peroxisomal catalase">
    <location>
        <begin position="1"/>
        <end position="504"/>
    </location>
</feature>
<feature type="short sequence motif" description="Microbody targeting signal">
    <location>
        <begin position="502"/>
        <end position="504"/>
    </location>
</feature>
<feature type="active site" evidence="3">
    <location>
        <position position="63"/>
    </location>
</feature>
<feature type="active site" evidence="3">
    <location>
        <position position="136"/>
    </location>
</feature>
<feature type="binding site" description="axial binding residue" evidence="1">
    <location>
        <position position="345"/>
    </location>
    <ligand>
        <name>heme</name>
        <dbReference type="ChEBI" id="CHEBI:30413"/>
    </ligand>
    <ligandPart>
        <name>Fe</name>
        <dbReference type="ChEBI" id="CHEBI:18248"/>
    </ligandPart>
</feature>
<proteinExistence type="inferred from homology"/>
<comment type="function">
    <text evidence="1">Catalyzes the degradation of hydrogen peroxide (H(2)O(2)) generated by peroxisomal oxidases to water and oxygen, thereby protecting cells from the toxic effects of hydrogen peroxide.</text>
</comment>
<comment type="catalytic activity">
    <reaction evidence="3">
        <text>2 H2O2 = O2 + 2 H2O</text>
        <dbReference type="Rhea" id="RHEA:20309"/>
        <dbReference type="ChEBI" id="CHEBI:15377"/>
        <dbReference type="ChEBI" id="CHEBI:15379"/>
        <dbReference type="ChEBI" id="CHEBI:16240"/>
        <dbReference type="EC" id="1.11.1.6"/>
    </reaction>
</comment>
<comment type="cofactor">
    <cofactor evidence="2">
        <name>heme</name>
        <dbReference type="ChEBI" id="CHEBI:30413"/>
    </cofactor>
</comment>
<comment type="subcellular location">
    <subcellularLocation>
        <location evidence="4">Peroxisome matrix</location>
    </subcellularLocation>
    <text>Bimodally distributed between the cytosol and peroxisomes in methanol-grown cells but is localized exclusively in peroxisomes in oleate- and D-alanine-grown cells.</text>
</comment>
<comment type="similarity">
    <text evidence="5">Belongs to the catalase family.</text>
</comment>
<accession>Q96VB8</accession>
<keyword id="KW-0349">Heme</keyword>
<keyword id="KW-0376">Hydrogen peroxide</keyword>
<keyword id="KW-0408">Iron</keyword>
<keyword id="KW-0479">Metal-binding</keyword>
<keyword id="KW-0560">Oxidoreductase</keyword>
<keyword id="KW-0575">Peroxidase</keyword>
<keyword id="KW-0576">Peroxisome</keyword>
<protein>
    <recommendedName>
        <fullName>Peroxisomal catalase</fullName>
        <ecNumber evidence="3">1.11.1.6</ecNumber>
    </recommendedName>
</protein>
<sequence length="504" mass="57095">MSNPPTYTTSQGCPVSDAFSTQRISGTKISIKTPVGPLLLQDFKFLDSLAHFDRERIPERVVHAKGAGAYGVFEVTEDISDICSAKFLDTVGKKTKIFTRFSTVGGEKGSSDSARDPRGFATKFYTEEGNLDLVYNNTPIFFIRDPTKFPHFIHTQKRNPATNCKDANMFWDYLTNNPESLHQIMYLFSNRGTPTSYRKMNGYSGHSYKWYNAKGEWVSSVHFISNQGVHNMTDEEAGDLSGKDPDFQTMDLYKAIEQGDYPSWECYVQTMTLEEAKKQPFSVYDLTKVWPHKDFPLRHFGKFTLNENAQNYFAEVEQAAFSPSHTVPGMEPSNDPVLQSRLFSYPDTHRHRLGVNYSQIPVNCPMRAVFAPQIRDGSMMVNGNLGGTPNYAGAYNCPVQYQAPIKASSKTPEEQYEGETLSYDWTEVNEYDFYQPGRFWEVLGKTKGEQEALVHNVANHVSGADEFIQDRVFAYFSKANPVIGDLIRKEVLKKSPRGASKNKF</sequence>
<dbReference type="EC" id="1.11.1.6" evidence="3"/>
<dbReference type="EMBL" id="AB064338">
    <property type="protein sequence ID" value="BAB69893.1"/>
    <property type="molecule type" value="Genomic_DNA"/>
</dbReference>
<dbReference type="SMR" id="Q96VB8"/>
<dbReference type="PeroxiBase" id="5262">
    <property type="entry name" value="CboiKat01"/>
</dbReference>
<dbReference type="BioCyc" id="MetaCyc:MONOMER-13166"/>
<dbReference type="GO" id="GO:0005739">
    <property type="term" value="C:mitochondrion"/>
    <property type="evidence" value="ECO:0007669"/>
    <property type="project" value="TreeGrafter"/>
</dbReference>
<dbReference type="GO" id="GO:0005782">
    <property type="term" value="C:peroxisomal matrix"/>
    <property type="evidence" value="ECO:0007669"/>
    <property type="project" value="UniProtKB-SubCell"/>
</dbReference>
<dbReference type="GO" id="GO:0004096">
    <property type="term" value="F:catalase activity"/>
    <property type="evidence" value="ECO:0007669"/>
    <property type="project" value="UniProtKB-EC"/>
</dbReference>
<dbReference type="GO" id="GO:0020037">
    <property type="term" value="F:heme binding"/>
    <property type="evidence" value="ECO:0007669"/>
    <property type="project" value="InterPro"/>
</dbReference>
<dbReference type="GO" id="GO:0046872">
    <property type="term" value="F:metal ion binding"/>
    <property type="evidence" value="ECO:0007669"/>
    <property type="project" value="UniProtKB-KW"/>
</dbReference>
<dbReference type="GO" id="GO:0042744">
    <property type="term" value="P:hydrogen peroxide catabolic process"/>
    <property type="evidence" value="ECO:0007669"/>
    <property type="project" value="UniProtKB-KW"/>
</dbReference>
<dbReference type="GO" id="GO:0042542">
    <property type="term" value="P:response to hydrogen peroxide"/>
    <property type="evidence" value="ECO:0007669"/>
    <property type="project" value="TreeGrafter"/>
</dbReference>
<dbReference type="CDD" id="cd08157">
    <property type="entry name" value="catalase_fungal"/>
    <property type="match status" value="1"/>
</dbReference>
<dbReference type="FunFam" id="2.40.180.10:FF:000001">
    <property type="entry name" value="Catalase"/>
    <property type="match status" value="1"/>
</dbReference>
<dbReference type="Gene3D" id="2.40.180.10">
    <property type="entry name" value="Catalase core domain"/>
    <property type="match status" value="1"/>
</dbReference>
<dbReference type="InterPro" id="IPR018028">
    <property type="entry name" value="Catalase"/>
</dbReference>
<dbReference type="InterPro" id="IPR024708">
    <property type="entry name" value="Catalase_AS"/>
</dbReference>
<dbReference type="InterPro" id="IPR024711">
    <property type="entry name" value="Catalase_clade1/3"/>
</dbReference>
<dbReference type="InterPro" id="IPR011614">
    <property type="entry name" value="Catalase_core"/>
</dbReference>
<dbReference type="InterPro" id="IPR002226">
    <property type="entry name" value="Catalase_haem_BS"/>
</dbReference>
<dbReference type="InterPro" id="IPR010582">
    <property type="entry name" value="Catalase_immune_responsive"/>
</dbReference>
<dbReference type="InterPro" id="IPR020835">
    <property type="entry name" value="Catalase_sf"/>
</dbReference>
<dbReference type="PANTHER" id="PTHR11465">
    <property type="entry name" value="CATALASE"/>
    <property type="match status" value="1"/>
</dbReference>
<dbReference type="PANTHER" id="PTHR11465:SF9">
    <property type="entry name" value="CATALASE"/>
    <property type="match status" value="1"/>
</dbReference>
<dbReference type="Pfam" id="PF00199">
    <property type="entry name" value="Catalase"/>
    <property type="match status" value="1"/>
</dbReference>
<dbReference type="Pfam" id="PF06628">
    <property type="entry name" value="Catalase-rel"/>
    <property type="match status" value="1"/>
</dbReference>
<dbReference type="PIRSF" id="PIRSF038928">
    <property type="entry name" value="Catalase_clade1-3"/>
    <property type="match status" value="1"/>
</dbReference>
<dbReference type="PRINTS" id="PR00067">
    <property type="entry name" value="CATALASE"/>
</dbReference>
<dbReference type="SMART" id="SM01060">
    <property type="entry name" value="Catalase"/>
    <property type="match status" value="1"/>
</dbReference>
<dbReference type="SUPFAM" id="SSF56634">
    <property type="entry name" value="Heme-dependent catalase-like"/>
    <property type="match status" value="1"/>
</dbReference>
<dbReference type="PROSITE" id="PS00437">
    <property type="entry name" value="CATALASE_1"/>
    <property type="match status" value="1"/>
</dbReference>
<dbReference type="PROSITE" id="PS00438">
    <property type="entry name" value="CATALASE_2"/>
    <property type="match status" value="1"/>
</dbReference>
<dbReference type="PROSITE" id="PS51402">
    <property type="entry name" value="CATALASE_3"/>
    <property type="match status" value="1"/>
</dbReference>
<organism>
    <name type="scientific">Candida boidinii</name>
    <name type="common">Yeast</name>
    <dbReference type="NCBI Taxonomy" id="5477"/>
    <lineage>
        <taxon>Eukaryota</taxon>
        <taxon>Fungi</taxon>
        <taxon>Dikarya</taxon>
        <taxon>Ascomycota</taxon>
        <taxon>Saccharomycotina</taxon>
        <taxon>Pichiomycetes</taxon>
        <taxon>Pichiales</taxon>
        <taxon>Pichiaceae</taxon>
        <taxon>Ogataea</taxon>
        <taxon>Ogataea/Candida clade</taxon>
    </lineage>
</organism>